<evidence type="ECO:0000255" key="1">
    <source>
        <dbReference type="HAMAP-Rule" id="MF_00421"/>
    </source>
</evidence>
<proteinExistence type="inferred from homology"/>
<comment type="function">
    <text evidence="1">Part of the phosphoribosylformylglycinamidine synthase complex involved in the purines biosynthetic pathway. Catalyzes the ATP-dependent conversion of formylglycinamide ribonucleotide (FGAR) and glutamine to yield formylglycinamidine ribonucleotide (FGAM) and glutamate. The FGAM synthase complex is composed of three subunits. PurQ produces an ammonia molecule by converting glutamine to glutamate. PurL transfers the ammonia molecule to FGAR to form FGAM in an ATP-dependent manner. PurS interacts with PurQ and PurL and is thought to assist in the transfer of the ammonia molecule from PurQ to PurL.</text>
</comment>
<comment type="catalytic activity">
    <reaction evidence="1">
        <text>N(2)-formyl-N(1)-(5-phospho-beta-D-ribosyl)glycinamide + L-glutamine + ATP + H2O = 2-formamido-N(1)-(5-O-phospho-beta-D-ribosyl)acetamidine + L-glutamate + ADP + phosphate + H(+)</text>
        <dbReference type="Rhea" id="RHEA:17129"/>
        <dbReference type="ChEBI" id="CHEBI:15377"/>
        <dbReference type="ChEBI" id="CHEBI:15378"/>
        <dbReference type="ChEBI" id="CHEBI:29985"/>
        <dbReference type="ChEBI" id="CHEBI:30616"/>
        <dbReference type="ChEBI" id="CHEBI:43474"/>
        <dbReference type="ChEBI" id="CHEBI:58359"/>
        <dbReference type="ChEBI" id="CHEBI:147286"/>
        <dbReference type="ChEBI" id="CHEBI:147287"/>
        <dbReference type="ChEBI" id="CHEBI:456216"/>
        <dbReference type="EC" id="6.3.5.3"/>
    </reaction>
</comment>
<comment type="catalytic activity">
    <reaction evidence="1">
        <text>L-glutamine + H2O = L-glutamate + NH4(+)</text>
        <dbReference type="Rhea" id="RHEA:15889"/>
        <dbReference type="ChEBI" id="CHEBI:15377"/>
        <dbReference type="ChEBI" id="CHEBI:28938"/>
        <dbReference type="ChEBI" id="CHEBI:29985"/>
        <dbReference type="ChEBI" id="CHEBI:58359"/>
        <dbReference type="EC" id="3.5.1.2"/>
    </reaction>
</comment>
<comment type="pathway">
    <text evidence="1">Purine metabolism; IMP biosynthesis via de novo pathway; 5-amino-1-(5-phospho-D-ribosyl)imidazole from N(2)-formyl-N(1)-(5-phospho-D-ribosyl)glycinamide: step 1/2.</text>
</comment>
<comment type="subunit">
    <text evidence="1">Part of the FGAM synthase complex composed of 1 PurL, 1 PurQ and 2 PurS subunits.</text>
</comment>
<comment type="subcellular location">
    <subcellularLocation>
        <location evidence="1">Cytoplasm</location>
    </subcellularLocation>
</comment>
<name>PURQ_METMP</name>
<keyword id="KW-0067">ATP-binding</keyword>
<keyword id="KW-0963">Cytoplasm</keyword>
<keyword id="KW-0315">Glutamine amidotransferase</keyword>
<keyword id="KW-0378">Hydrolase</keyword>
<keyword id="KW-0436">Ligase</keyword>
<keyword id="KW-0547">Nucleotide-binding</keyword>
<keyword id="KW-0658">Purine biosynthesis</keyword>
<keyword id="KW-1185">Reference proteome</keyword>
<dbReference type="EC" id="6.3.5.3" evidence="1"/>
<dbReference type="EC" id="3.5.1.2" evidence="1"/>
<dbReference type="EMBL" id="BX950229">
    <property type="protein sequence ID" value="CAF29734.1"/>
    <property type="molecule type" value="Genomic_DNA"/>
</dbReference>
<dbReference type="SMR" id="Q6M0U0"/>
<dbReference type="STRING" id="267377.MMP0178"/>
<dbReference type="EnsemblBacteria" id="CAF29734">
    <property type="protein sequence ID" value="CAF29734"/>
    <property type="gene ID" value="MMP0178"/>
</dbReference>
<dbReference type="KEGG" id="mmp:MMP0178"/>
<dbReference type="PATRIC" id="fig|267377.15.peg.182"/>
<dbReference type="eggNOG" id="arCOG00102">
    <property type="taxonomic scope" value="Archaea"/>
</dbReference>
<dbReference type="HOGENOM" id="CLU_001031_3_0_2"/>
<dbReference type="UniPathway" id="UPA00074">
    <property type="reaction ID" value="UER00128"/>
</dbReference>
<dbReference type="Proteomes" id="UP000000590">
    <property type="component" value="Chromosome"/>
</dbReference>
<dbReference type="GO" id="GO:0005737">
    <property type="term" value="C:cytoplasm"/>
    <property type="evidence" value="ECO:0007669"/>
    <property type="project" value="UniProtKB-SubCell"/>
</dbReference>
<dbReference type="GO" id="GO:0005524">
    <property type="term" value="F:ATP binding"/>
    <property type="evidence" value="ECO:0007669"/>
    <property type="project" value="UniProtKB-KW"/>
</dbReference>
<dbReference type="GO" id="GO:0004359">
    <property type="term" value="F:glutaminase activity"/>
    <property type="evidence" value="ECO:0007669"/>
    <property type="project" value="UniProtKB-EC"/>
</dbReference>
<dbReference type="GO" id="GO:0004642">
    <property type="term" value="F:phosphoribosylformylglycinamidine synthase activity"/>
    <property type="evidence" value="ECO:0007669"/>
    <property type="project" value="UniProtKB-UniRule"/>
</dbReference>
<dbReference type="GO" id="GO:0006189">
    <property type="term" value="P:'de novo' IMP biosynthetic process"/>
    <property type="evidence" value="ECO:0007669"/>
    <property type="project" value="UniProtKB-UniRule"/>
</dbReference>
<dbReference type="CDD" id="cd01740">
    <property type="entry name" value="GATase1_FGAR_AT"/>
    <property type="match status" value="1"/>
</dbReference>
<dbReference type="Gene3D" id="3.40.50.880">
    <property type="match status" value="1"/>
</dbReference>
<dbReference type="HAMAP" id="MF_00421">
    <property type="entry name" value="PurQ"/>
    <property type="match status" value="1"/>
</dbReference>
<dbReference type="InterPro" id="IPR029062">
    <property type="entry name" value="Class_I_gatase-like"/>
</dbReference>
<dbReference type="InterPro" id="IPR010075">
    <property type="entry name" value="PRibForGlyAmidine_synth_PurQ"/>
</dbReference>
<dbReference type="NCBIfam" id="TIGR01737">
    <property type="entry name" value="FGAM_synth_I"/>
    <property type="match status" value="1"/>
</dbReference>
<dbReference type="PANTHER" id="PTHR10099">
    <property type="entry name" value="PHOSPHORIBOSYLFORMYLGLYCINAMIDINE SYNTHASE"/>
    <property type="match status" value="1"/>
</dbReference>
<dbReference type="PANTHER" id="PTHR10099:SF1">
    <property type="entry name" value="PHOSPHORIBOSYLFORMYLGLYCINAMIDINE SYNTHASE"/>
    <property type="match status" value="1"/>
</dbReference>
<dbReference type="Pfam" id="PF13507">
    <property type="entry name" value="GATase_5"/>
    <property type="match status" value="1"/>
</dbReference>
<dbReference type="PIRSF" id="PIRSF001586">
    <property type="entry name" value="FGAM_synth_I"/>
    <property type="match status" value="1"/>
</dbReference>
<dbReference type="SMART" id="SM01211">
    <property type="entry name" value="GATase_5"/>
    <property type="match status" value="1"/>
</dbReference>
<dbReference type="SUPFAM" id="SSF52317">
    <property type="entry name" value="Class I glutamine amidotransferase-like"/>
    <property type="match status" value="1"/>
</dbReference>
<dbReference type="PROSITE" id="PS51273">
    <property type="entry name" value="GATASE_TYPE_1"/>
    <property type="match status" value="1"/>
</dbReference>
<organism>
    <name type="scientific">Methanococcus maripaludis (strain DSM 14266 / JCM 13030 / NBRC 101832 / S2 / LL)</name>
    <dbReference type="NCBI Taxonomy" id="267377"/>
    <lineage>
        <taxon>Archaea</taxon>
        <taxon>Methanobacteriati</taxon>
        <taxon>Methanobacteriota</taxon>
        <taxon>Methanomada group</taxon>
        <taxon>Methanococci</taxon>
        <taxon>Methanococcales</taxon>
        <taxon>Methanococcaceae</taxon>
        <taxon>Methanococcus</taxon>
    </lineage>
</organism>
<gene>
    <name evidence="1" type="primary">purQ</name>
    <name type="ordered locus">MMP0178</name>
</gene>
<reference key="1">
    <citation type="journal article" date="2004" name="J. Bacteriol.">
        <title>Complete genome sequence of the genetically tractable hydrogenotrophic methanogen Methanococcus maripaludis.</title>
        <authorList>
            <person name="Hendrickson E.L."/>
            <person name="Kaul R."/>
            <person name="Zhou Y."/>
            <person name="Bovee D."/>
            <person name="Chapman P."/>
            <person name="Chung J."/>
            <person name="Conway de Macario E."/>
            <person name="Dodsworth J.A."/>
            <person name="Gillett W."/>
            <person name="Graham D.E."/>
            <person name="Hackett M."/>
            <person name="Haydock A.K."/>
            <person name="Kang A."/>
            <person name="Land M.L."/>
            <person name="Levy R."/>
            <person name="Lie T.J."/>
            <person name="Major T.A."/>
            <person name="Moore B.C."/>
            <person name="Porat I."/>
            <person name="Palmeiri A."/>
            <person name="Rouse G."/>
            <person name="Saenphimmachak C."/>
            <person name="Soell D."/>
            <person name="Van Dien S."/>
            <person name="Wang T."/>
            <person name="Whitman W.B."/>
            <person name="Xia Q."/>
            <person name="Zhang Y."/>
            <person name="Larimer F.W."/>
            <person name="Olson M.V."/>
            <person name="Leigh J.A."/>
        </authorList>
    </citation>
    <scope>NUCLEOTIDE SEQUENCE [LARGE SCALE GENOMIC DNA]</scope>
    <source>
        <strain>DSM 14266 / JCM 13030 / NBRC 101832 / S2 / LL</strain>
    </source>
</reference>
<sequence length="272" mass="30466">MIKVVPKVLVMSGYGINCETETAHAFQKAGAETDIVHINDLIAGKKKMADYEIIMFPGGFSYGDDTGSGNAFANKIKNNLFDDLTEFINSGKLILGICNGFQVMTNLGLFALPSTDYGERISALESNTNNRYECRWVHIKENDSVCVFTKGINVTHVPIAHGEGRFYCDEKTYHELKENKQIVFSYCDSEGNPANGEYPLNPNGAYQDIAGICDKTGRIFGLMPHPERSLYSISEPEYQLKKEIAKRNGDIIPEFIENNLQIFKNAVEYFNK</sequence>
<accession>Q6M0U0</accession>
<protein>
    <recommendedName>
        <fullName evidence="1">Phosphoribosylformylglycinamidine synthase subunit PurQ</fullName>
        <shortName evidence="1">FGAM synthase</shortName>
        <ecNumber evidence="1">6.3.5.3</ecNumber>
    </recommendedName>
    <alternativeName>
        <fullName evidence="1">Formylglycinamide ribonucleotide amidotransferase subunit I</fullName>
        <shortName evidence="1">FGAR amidotransferase I</shortName>
        <shortName evidence="1">FGAR-AT I</shortName>
    </alternativeName>
    <alternativeName>
        <fullName evidence="1">Glutaminase PurQ</fullName>
        <ecNumber evidence="1">3.5.1.2</ecNumber>
    </alternativeName>
    <alternativeName>
        <fullName evidence="1">Phosphoribosylformylglycinamidine synthase subunit I</fullName>
    </alternativeName>
</protein>
<feature type="chain" id="PRO_0000100611" description="Phosphoribosylformylglycinamidine synthase subunit PurQ">
    <location>
        <begin position="1"/>
        <end position="272"/>
    </location>
</feature>
<feature type="domain" description="Glutamine amidotransferase type-1" evidence="1">
    <location>
        <begin position="8"/>
        <end position="272"/>
    </location>
</feature>
<feature type="active site" description="Nucleophile" evidence="1">
    <location>
        <position position="98"/>
    </location>
</feature>
<feature type="active site" evidence="1">
    <location>
        <position position="225"/>
    </location>
</feature>
<feature type="active site" evidence="1">
    <location>
        <position position="227"/>
    </location>
</feature>
<feature type="active site" evidence="1">
    <location>
        <position position="235"/>
    </location>
</feature>